<sequence>MLKEFKEFALKGNVVDMAVGIIIGGAFTGIVKSLVGDVLTPPLGLLLNGVDFTNLFVVLKEGATPGPYLALEQAQSAGAVTLNYGLFINAFISFVIMAVAVFFLVRGINRLRKMTEKPPEPAAAPDTKECPFCFSAIPVKAVRCPNCTSQL</sequence>
<comment type="function">
    <text evidence="1">Channel that opens in response to stretch forces in the membrane lipid bilayer. May participate in the regulation of osmotic pressure changes within the cell.</text>
</comment>
<comment type="subunit">
    <text evidence="1">Homopentamer.</text>
</comment>
<comment type="subcellular location">
    <subcellularLocation>
        <location evidence="1">Cell inner membrane</location>
        <topology evidence="1">Multi-pass membrane protein</topology>
    </subcellularLocation>
</comment>
<comment type="similarity">
    <text evidence="1">Belongs to the MscL family.</text>
</comment>
<protein>
    <recommendedName>
        <fullName evidence="1">Large-conductance mechanosensitive channel</fullName>
    </recommendedName>
</protein>
<dbReference type="EMBL" id="CP001099">
    <property type="protein sequence ID" value="ACF11360.1"/>
    <property type="molecule type" value="Genomic_DNA"/>
</dbReference>
<dbReference type="RefSeq" id="WP_012502193.1">
    <property type="nucleotide sequence ID" value="NC_011027.1"/>
</dbReference>
<dbReference type="STRING" id="517417.Cpar_0951"/>
<dbReference type="KEGG" id="cpc:Cpar_0951"/>
<dbReference type="eggNOG" id="COG1970">
    <property type="taxonomic scope" value="Bacteria"/>
</dbReference>
<dbReference type="HOGENOM" id="CLU_095787_2_3_10"/>
<dbReference type="OrthoDB" id="9810350at2"/>
<dbReference type="Proteomes" id="UP000008811">
    <property type="component" value="Chromosome"/>
</dbReference>
<dbReference type="GO" id="GO:0005886">
    <property type="term" value="C:plasma membrane"/>
    <property type="evidence" value="ECO:0007669"/>
    <property type="project" value="UniProtKB-SubCell"/>
</dbReference>
<dbReference type="GO" id="GO:0008381">
    <property type="term" value="F:mechanosensitive monoatomic ion channel activity"/>
    <property type="evidence" value="ECO:0007669"/>
    <property type="project" value="UniProtKB-UniRule"/>
</dbReference>
<dbReference type="Gene3D" id="1.10.1200.120">
    <property type="entry name" value="Large-conductance mechanosensitive channel, MscL, domain 1"/>
    <property type="match status" value="1"/>
</dbReference>
<dbReference type="HAMAP" id="MF_00115">
    <property type="entry name" value="MscL"/>
    <property type="match status" value="1"/>
</dbReference>
<dbReference type="InterPro" id="IPR019823">
    <property type="entry name" value="Mechanosensitive_channel_CS"/>
</dbReference>
<dbReference type="InterPro" id="IPR001185">
    <property type="entry name" value="MS_channel"/>
</dbReference>
<dbReference type="InterPro" id="IPR037673">
    <property type="entry name" value="MSC/AndL"/>
</dbReference>
<dbReference type="InterPro" id="IPR036019">
    <property type="entry name" value="MscL_channel"/>
</dbReference>
<dbReference type="NCBIfam" id="TIGR00220">
    <property type="entry name" value="mscL"/>
    <property type="match status" value="1"/>
</dbReference>
<dbReference type="NCBIfam" id="NF001843">
    <property type="entry name" value="PRK00567.1-4"/>
    <property type="match status" value="1"/>
</dbReference>
<dbReference type="PANTHER" id="PTHR30266:SF2">
    <property type="entry name" value="LARGE-CONDUCTANCE MECHANOSENSITIVE CHANNEL"/>
    <property type="match status" value="1"/>
</dbReference>
<dbReference type="PANTHER" id="PTHR30266">
    <property type="entry name" value="MECHANOSENSITIVE CHANNEL MSCL"/>
    <property type="match status" value="1"/>
</dbReference>
<dbReference type="Pfam" id="PF01741">
    <property type="entry name" value="MscL"/>
    <property type="match status" value="1"/>
</dbReference>
<dbReference type="PRINTS" id="PR01264">
    <property type="entry name" value="MECHCHANNEL"/>
</dbReference>
<dbReference type="SUPFAM" id="SSF81330">
    <property type="entry name" value="Gated mechanosensitive channel"/>
    <property type="match status" value="1"/>
</dbReference>
<dbReference type="PROSITE" id="PS01327">
    <property type="entry name" value="MSCL"/>
    <property type="match status" value="1"/>
</dbReference>
<keyword id="KW-0997">Cell inner membrane</keyword>
<keyword id="KW-1003">Cell membrane</keyword>
<keyword id="KW-0407">Ion channel</keyword>
<keyword id="KW-0406">Ion transport</keyword>
<keyword id="KW-0472">Membrane</keyword>
<keyword id="KW-0812">Transmembrane</keyword>
<keyword id="KW-1133">Transmembrane helix</keyword>
<keyword id="KW-0813">Transport</keyword>
<accession>B3QN57</accession>
<feature type="chain" id="PRO_1000094888" description="Large-conductance mechanosensitive channel">
    <location>
        <begin position="1"/>
        <end position="151"/>
    </location>
</feature>
<feature type="transmembrane region" description="Helical" evidence="1">
    <location>
        <begin position="19"/>
        <end position="39"/>
    </location>
</feature>
<feature type="transmembrane region" description="Helical" evidence="1">
    <location>
        <begin position="85"/>
        <end position="105"/>
    </location>
</feature>
<organism>
    <name type="scientific">Chlorobaculum parvum (strain DSM 263 / NCIMB 8327)</name>
    <name type="common">Chlorobium vibrioforme subsp. thiosulfatophilum</name>
    <dbReference type="NCBI Taxonomy" id="517417"/>
    <lineage>
        <taxon>Bacteria</taxon>
        <taxon>Pseudomonadati</taxon>
        <taxon>Chlorobiota</taxon>
        <taxon>Chlorobiia</taxon>
        <taxon>Chlorobiales</taxon>
        <taxon>Chlorobiaceae</taxon>
        <taxon>Chlorobaculum</taxon>
    </lineage>
</organism>
<gene>
    <name evidence="1" type="primary">mscL</name>
    <name type="ordered locus">Cpar_0951</name>
</gene>
<name>MSCL_CHLP8</name>
<evidence type="ECO:0000255" key="1">
    <source>
        <dbReference type="HAMAP-Rule" id="MF_00115"/>
    </source>
</evidence>
<proteinExistence type="inferred from homology"/>
<reference key="1">
    <citation type="submission" date="2008-06" db="EMBL/GenBank/DDBJ databases">
        <title>Complete sequence of Chlorobaculum parvum NCIB 8327.</title>
        <authorList>
            <consortium name="US DOE Joint Genome Institute"/>
            <person name="Lucas S."/>
            <person name="Copeland A."/>
            <person name="Lapidus A."/>
            <person name="Glavina del Rio T."/>
            <person name="Dalin E."/>
            <person name="Tice H."/>
            <person name="Bruce D."/>
            <person name="Goodwin L."/>
            <person name="Pitluck S."/>
            <person name="Schmutz J."/>
            <person name="Larimer F."/>
            <person name="Land M."/>
            <person name="Hauser L."/>
            <person name="Kyrpides N."/>
            <person name="Mikhailova N."/>
            <person name="Zhao F."/>
            <person name="Li T."/>
            <person name="Liu Z."/>
            <person name="Overmann J."/>
            <person name="Bryant D.A."/>
            <person name="Richardson P."/>
        </authorList>
    </citation>
    <scope>NUCLEOTIDE SEQUENCE [LARGE SCALE GENOMIC DNA]</scope>
    <source>
        <strain>DSM 263 / NCIMB 8327</strain>
    </source>
</reference>